<organism>
    <name type="scientific">Solanum lycopersicum</name>
    <name type="common">Tomato</name>
    <name type="synonym">Lycopersicon esculentum</name>
    <dbReference type="NCBI Taxonomy" id="4081"/>
    <lineage>
        <taxon>Eukaryota</taxon>
        <taxon>Viridiplantae</taxon>
        <taxon>Streptophyta</taxon>
        <taxon>Embryophyta</taxon>
        <taxon>Tracheophyta</taxon>
        <taxon>Spermatophyta</taxon>
        <taxon>Magnoliopsida</taxon>
        <taxon>eudicotyledons</taxon>
        <taxon>Gunneridae</taxon>
        <taxon>Pentapetalae</taxon>
        <taxon>asterids</taxon>
        <taxon>lamiids</taxon>
        <taxon>Solanales</taxon>
        <taxon>Solanaceae</taxon>
        <taxon>Solanoideae</taxon>
        <taxon>Solaneae</taxon>
        <taxon>Solanum</taxon>
        <taxon>Solanum subgen. Lycopersicon</taxon>
    </lineage>
</organism>
<evidence type="ECO:0000250" key="1"/>
<evidence type="ECO:0000250" key="2">
    <source>
        <dbReference type="UniProtKB" id="P29022"/>
    </source>
</evidence>
<evidence type="ECO:0000305" key="3"/>
<sequence length="253" mass="27632">MKFNIVSPVALSCLFFLFLTGTLAQNAGSIVTRELFEQMLSFRNNDACPAKGFYTYDAFIAAANSFPGFGTAGDDTARKKEIAAFFGQTSHETNGGSAGTFTGGYCFVKQIEQSDRYYGRGPIQLTHQSNYERAGQGIGVGQELVNNPDLVATDPIISFKTAIWFWMTEQDNKPSCHNVIIGQWTPSPKDTAANRVPGYGVITNIINGQFECGMGPNTAAESRIGFYRRYCGMLNVPTGENLDCNNQKNFAQG</sequence>
<proteinExistence type="evidence at protein level"/>
<reference key="1">
    <citation type="journal article" date="1993" name="Plant Mol. Biol.">
        <title>Molecular characterization of four chitinase cDNAs obtained from Cladosporium fulvum-infected tomato.</title>
        <authorList>
            <person name="Danhash N."/>
            <person name="Wagemakers C.A.M."/>
            <person name="van Kan J.A.L."/>
            <person name="de Wit P.J.G.M."/>
        </authorList>
    </citation>
    <scope>NUCLEOTIDE SEQUENCE [MRNA]</scope>
    <scope>PROTEIN SEQUENCE OF 134-152 AND 225-228</scope>
    <source>
        <strain>cv. Moneymaker</strain>
    </source>
</reference>
<keyword id="KW-0119">Carbohydrate metabolism</keyword>
<keyword id="KW-0146">Chitin degradation</keyword>
<keyword id="KW-0903">Direct protein sequencing</keyword>
<keyword id="KW-1015">Disulfide bond</keyword>
<keyword id="KW-0326">Glycosidase</keyword>
<keyword id="KW-0378">Hydrolase</keyword>
<keyword id="KW-0568">Pathogenesis-related protein</keyword>
<keyword id="KW-0611">Plant defense</keyword>
<keyword id="KW-0624">Polysaccharide degradation</keyword>
<keyword id="KW-1185">Reference proteome</keyword>
<keyword id="KW-0964">Secreted</keyword>
<keyword id="KW-0732">Signal</keyword>
<comment type="function">
    <text>Defense against chitin-containing fungal pathogens.</text>
</comment>
<comment type="catalytic activity">
    <reaction>
        <text>Random endo-hydrolysis of N-acetyl-beta-D-glucosaminide (1-&gt;4)-beta-linkages in chitin and chitodextrins.</text>
        <dbReference type="EC" id="3.2.1.14"/>
    </reaction>
</comment>
<comment type="subcellular location">
    <subcellularLocation>
        <location>Secreted</location>
        <location>Extracellular space</location>
    </subcellularLocation>
</comment>
<comment type="induction">
    <text>By fungal infection.</text>
</comment>
<comment type="similarity">
    <text evidence="3">Belongs to the glycosyl hydrolase 19 family. Chitinase class II subfamily.</text>
</comment>
<name>CHIA_SOLLC</name>
<gene>
    <name type="primary">CHI3</name>
</gene>
<feature type="signal peptide" evidence="1">
    <location>
        <begin position="1"/>
        <end position="24"/>
    </location>
</feature>
<feature type="chain" id="PRO_0000005299" description="Acidic 26 kDa endochitinase">
    <location>
        <begin position="25"/>
        <end position="253"/>
    </location>
</feature>
<feature type="active site" description="Proton donor" evidence="2">
    <location>
        <position position="92"/>
    </location>
</feature>
<feature type="disulfide bond" evidence="1">
    <location>
        <begin position="212"/>
        <end position="244"/>
    </location>
</feature>
<protein>
    <recommendedName>
        <fullName>Acidic 26 kDa endochitinase</fullName>
        <ecNumber>3.2.1.14</ecNumber>
    </recommendedName>
</protein>
<dbReference type="EC" id="3.2.1.14"/>
<dbReference type="EMBL" id="Z15141">
    <property type="protein sequence ID" value="CAA78846.1"/>
    <property type="molecule type" value="mRNA"/>
</dbReference>
<dbReference type="PIR" id="S37343">
    <property type="entry name" value="S37343"/>
</dbReference>
<dbReference type="RefSeq" id="NP_001234404.1">
    <property type="nucleotide sequence ID" value="NM_001247475.2"/>
</dbReference>
<dbReference type="SMR" id="Q05539"/>
<dbReference type="STRING" id="4081.Q05539"/>
<dbReference type="Allergome" id="1273">
    <property type="allergen name" value="Sola l Chitinase"/>
</dbReference>
<dbReference type="CAZy" id="GH19">
    <property type="family name" value="Glycoside Hydrolase Family 19"/>
</dbReference>
<dbReference type="PaxDb" id="4081-Solyc02g082920.2.1"/>
<dbReference type="EnsemblPlants" id="Solyc02g082920.3.1">
    <property type="protein sequence ID" value="Solyc02g082920.3.1"/>
    <property type="gene ID" value="Solyc02g082920.3"/>
</dbReference>
<dbReference type="GeneID" id="544149"/>
<dbReference type="Gramene" id="Solyc02g082920.3.1">
    <property type="protein sequence ID" value="Solyc02g082920.3.1"/>
    <property type="gene ID" value="Solyc02g082920.3"/>
</dbReference>
<dbReference type="KEGG" id="sly:544149"/>
<dbReference type="eggNOG" id="KOG4742">
    <property type="taxonomic scope" value="Eukaryota"/>
</dbReference>
<dbReference type="HOGENOM" id="CLU_045506_1_0_1"/>
<dbReference type="InParanoid" id="Q05539"/>
<dbReference type="OMA" id="HQSNYER"/>
<dbReference type="OrthoDB" id="5985073at2759"/>
<dbReference type="PhylomeDB" id="Q05539"/>
<dbReference type="Proteomes" id="UP000004994">
    <property type="component" value="Chromosome 2"/>
</dbReference>
<dbReference type="ExpressionAtlas" id="Q05539">
    <property type="expression patterns" value="baseline and differential"/>
</dbReference>
<dbReference type="GO" id="GO:0005576">
    <property type="term" value="C:extracellular region"/>
    <property type="evidence" value="ECO:0007669"/>
    <property type="project" value="UniProtKB-SubCell"/>
</dbReference>
<dbReference type="GO" id="GO:0004568">
    <property type="term" value="F:chitinase activity"/>
    <property type="evidence" value="ECO:0000318"/>
    <property type="project" value="GO_Central"/>
</dbReference>
<dbReference type="GO" id="GO:0008843">
    <property type="term" value="F:endochitinase activity"/>
    <property type="evidence" value="ECO:0007669"/>
    <property type="project" value="UniProtKB-EC"/>
</dbReference>
<dbReference type="GO" id="GO:0016998">
    <property type="term" value="P:cell wall macromolecule catabolic process"/>
    <property type="evidence" value="ECO:0007669"/>
    <property type="project" value="InterPro"/>
</dbReference>
<dbReference type="GO" id="GO:0006032">
    <property type="term" value="P:chitin catabolic process"/>
    <property type="evidence" value="ECO:0007669"/>
    <property type="project" value="UniProtKB-KW"/>
</dbReference>
<dbReference type="GO" id="GO:0050832">
    <property type="term" value="P:defense response to fungus"/>
    <property type="evidence" value="ECO:0000318"/>
    <property type="project" value="GO_Central"/>
</dbReference>
<dbReference type="GO" id="GO:0000272">
    <property type="term" value="P:polysaccharide catabolic process"/>
    <property type="evidence" value="ECO:0007669"/>
    <property type="project" value="UniProtKB-KW"/>
</dbReference>
<dbReference type="CDD" id="cd00325">
    <property type="entry name" value="chitinase_GH19"/>
    <property type="match status" value="1"/>
</dbReference>
<dbReference type="FunFam" id="3.30.20.10:FF:000002">
    <property type="entry name" value="Acidic endochitinase pcht28"/>
    <property type="match status" value="1"/>
</dbReference>
<dbReference type="Gene3D" id="1.10.530.10">
    <property type="match status" value="1"/>
</dbReference>
<dbReference type="Gene3D" id="3.30.20.10">
    <property type="entry name" value="Endochitinase, domain 2"/>
    <property type="match status" value="1"/>
</dbReference>
<dbReference type="InterPro" id="IPR016283">
    <property type="entry name" value="Glyco_hydro_19"/>
</dbReference>
<dbReference type="InterPro" id="IPR000726">
    <property type="entry name" value="Glyco_hydro_19_cat"/>
</dbReference>
<dbReference type="InterPro" id="IPR023346">
    <property type="entry name" value="Lysozyme-like_dom_sf"/>
</dbReference>
<dbReference type="PANTHER" id="PTHR22595:SF159">
    <property type="entry name" value="ACIDIC 26 KDA ENDOCHITINASE"/>
    <property type="match status" value="1"/>
</dbReference>
<dbReference type="PANTHER" id="PTHR22595">
    <property type="entry name" value="CHITINASE-RELATED"/>
    <property type="match status" value="1"/>
</dbReference>
<dbReference type="Pfam" id="PF00182">
    <property type="entry name" value="Glyco_hydro_19"/>
    <property type="match status" value="1"/>
</dbReference>
<dbReference type="PIRSF" id="PIRSF001060">
    <property type="entry name" value="Endochitinase"/>
    <property type="match status" value="1"/>
</dbReference>
<dbReference type="SUPFAM" id="SSF53955">
    <property type="entry name" value="Lysozyme-like"/>
    <property type="match status" value="1"/>
</dbReference>
<dbReference type="PROSITE" id="PS00773">
    <property type="entry name" value="CHITINASE_19_1"/>
    <property type="match status" value="1"/>
</dbReference>
<dbReference type="PROSITE" id="PS00774">
    <property type="entry name" value="CHITINASE_19_2"/>
    <property type="match status" value="1"/>
</dbReference>
<accession>Q05539</accession>